<protein>
    <recommendedName>
        <fullName>Metalloproteinase inhibitor 3</fullName>
    </recommendedName>
    <alternativeName>
        <fullName>Tissue inhibitor of metalloproteinases 3</fullName>
        <shortName>TIMP-3</shortName>
    </alternativeName>
</protein>
<feature type="signal peptide" evidence="4">
    <location>
        <begin position="1"/>
        <end position="23"/>
    </location>
</feature>
<feature type="chain" id="PRO_0000034344" description="Metalloproteinase inhibitor 3">
    <location>
        <begin position="24"/>
        <end position="211"/>
    </location>
</feature>
<feature type="domain" description="NTR" evidence="5">
    <location>
        <begin position="24"/>
        <end position="143"/>
    </location>
</feature>
<feature type="region of interest" description="Involved in metalloproteinase-binding" evidence="2">
    <location>
        <begin position="24"/>
        <end position="27"/>
    </location>
</feature>
<feature type="region of interest" description="Involved in metalloproteinase-binding" evidence="2">
    <location>
        <begin position="88"/>
        <end position="89"/>
    </location>
</feature>
<feature type="region of interest" description="Mediates interaction with EFEMP1" evidence="1">
    <location>
        <begin position="105"/>
        <end position="188"/>
    </location>
</feature>
<feature type="binding site" evidence="2">
    <location>
        <position position="24"/>
    </location>
    <ligand>
        <name>Zn(2+)</name>
        <dbReference type="ChEBI" id="CHEBI:29105"/>
        <note>ligand shared with metalloproteinase partner</note>
    </ligand>
</feature>
<feature type="site" description="Involved in metalloproteinase-binding" evidence="2">
    <location>
        <position position="37"/>
    </location>
</feature>
<feature type="disulfide bond" evidence="5">
    <location>
        <begin position="24"/>
        <end position="91"/>
    </location>
</feature>
<feature type="disulfide bond" evidence="5">
    <location>
        <begin position="26"/>
        <end position="118"/>
    </location>
</feature>
<feature type="disulfide bond" evidence="5">
    <location>
        <begin position="36"/>
        <end position="143"/>
    </location>
</feature>
<feature type="disulfide bond" evidence="5">
    <location>
        <begin position="145"/>
        <end position="192"/>
    </location>
</feature>
<feature type="disulfide bond" evidence="5">
    <location>
        <begin position="150"/>
        <end position="155"/>
    </location>
</feature>
<feature type="disulfide bond" evidence="5">
    <location>
        <begin position="163"/>
        <end position="184"/>
    </location>
</feature>
<feature type="sequence conflict" description="In Ref. 7; AAH14713." evidence="8" ref="7">
    <original>P</original>
    <variation>S</variation>
    <location>
        <position position="31"/>
    </location>
</feature>
<feature type="sequence conflict" description="In Ref. 7; AAH14713." evidence="8" ref="7">
    <original>K</original>
    <variation>T</variation>
    <location>
        <position position="53"/>
    </location>
</feature>
<feature type="sequence conflict" description="In Ref. 7; AAH14713." evidence="8" ref="7">
    <original>K</original>
    <variation>N</variation>
    <location>
        <position position="148"/>
    </location>
</feature>
<comment type="function">
    <text evidence="3 6 7">Mediates a variety of processes including matrix regulation and turnover, inflammation, and angiogenesis, through reversible inhibition of zinc protease superfamily enzymes, primarily matrix metalloproteinases (MMPs) (PubMed:15322543, PubMed:21282576). Regulates extracellular matrix (ECM) remodeling through inhibition of matrix metalloproteinases (MMP) including MMP-1, MMP-2, MMP-3, MMP-7, MMP-9, MMP-13, MMP-14 and MMP-15. Additionally, modulates the processing of amyloid precursor protein (APP) and apolipoprotein E receptor ApoER2 by inhibiting two alpha-secretases ADAM10 and ADAM17. Functions as a tumor suppressor and a potent inhibitor of angiogenesis. Exerts its anti-angiogenic effect by directly interacting with vascular endothelial growth factor (VEGF) receptor-2/KDR, preventing its binding to the VEGFA ligand. Selectively induces apoptosis in angiogenic endothelial cells through a caspase-independent cell death pathway. Mechanistically, inhibits matrix-induced focal adhesion kinase PTK2 tyrosine phosphorylation and association with paxillin/PXN and disrupts the incorporation of ITGB3, PTK2 and PXN into focal adhesion contacts on the matrix.</text>
</comment>
<comment type="subunit">
    <text evidence="3">Interacts with EFEMP1. Interacts with KDR.</text>
</comment>
<comment type="subcellular location">
    <subcellularLocation>
        <location evidence="3">Secreted</location>
        <location evidence="3">Extracellular space</location>
        <location evidence="3">Extracellular matrix</location>
    </subcellularLocation>
</comment>
<comment type="tissue specificity">
    <text>Highest levels are found in kidney, lung and brain followed by ovary and uterus. Low levels are found in bone.</text>
</comment>
<comment type="induction">
    <text>Highly induced by phorbol ester (PMA), EGF and transforming growth factor-beta 1. Also induced by dexamethasone.</text>
</comment>
<comment type="disruption phenotype">
    <text evidence="6 7">Timp3 deficiency results in a failure of liver regeneration via sustained activation of TNF leading to hepatocyte apoptosis (PubMed:15322543). In addition, Timp3-deficient mice show abnormalities in the choroidal vasculature (PubMed:21282576).</text>
</comment>
<comment type="similarity">
    <text evidence="8">Belongs to the protease inhibitor I35 (TIMP) family.</text>
</comment>
<sequence>MTPWLGLVVLLSCWSLGHWGAEACTCSPSHPQDAFCNSDIVIRAKVVGKKLVKEGPFGTLVYTIKQMKMYRGFSKMPHVQYIHTEASESLCGLKLEVNKYQYLLTGRVYEGKMYTGLCNFVERWDHLTLSQRKGLNYRYHLGCNCKIKSCYYLPCFVTSKNECLWTDMLSNFGYPGYQSKHYACIRQKGGYCSWYRGWAPPDKSISNATDP</sequence>
<organism>
    <name type="scientific">Mus musculus</name>
    <name type="common">Mouse</name>
    <dbReference type="NCBI Taxonomy" id="10090"/>
    <lineage>
        <taxon>Eukaryota</taxon>
        <taxon>Metazoa</taxon>
        <taxon>Chordata</taxon>
        <taxon>Craniata</taxon>
        <taxon>Vertebrata</taxon>
        <taxon>Euteleostomi</taxon>
        <taxon>Mammalia</taxon>
        <taxon>Eutheria</taxon>
        <taxon>Euarchontoglires</taxon>
        <taxon>Glires</taxon>
        <taxon>Rodentia</taxon>
        <taxon>Myomorpha</taxon>
        <taxon>Muroidea</taxon>
        <taxon>Muridae</taxon>
        <taxon>Murinae</taxon>
        <taxon>Mus</taxon>
        <taxon>Mus</taxon>
    </lineage>
</organism>
<reference key="1">
    <citation type="journal article" date="1994" name="J. Biol. Chem.">
        <title>Tissue inhibitor of metalloproteinases-3 (TIMP-3) is an extracellular matrix-associated protein with a distinctive pattern of expression in mouse cells and tissues.</title>
        <authorList>
            <person name="Leco K.J."/>
            <person name="Khokha R."/>
            <person name="Pavloff N."/>
            <person name="Hawkes S.P."/>
            <person name="Edwards D.R."/>
        </authorList>
    </citation>
    <scope>NUCLEOTIDE SEQUENCE [MRNA]</scope>
</reference>
<reference key="2">
    <citation type="journal article" date="1994" name="Cancer Res.">
        <title>Molecular cloning of five messenger RNAs differentially expressed in preneoplastic or neoplastic JB6 mouse epidermal cells: one is homologous to human tissue inhibitor of metalloproteinases-3.</title>
        <authorList>
            <person name="Sun Y."/>
            <person name="Hegamyer G."/>
            <person name="Colburn N.H."/>
        </authorList>
    </citation>
    <scope>NUCLEOTIDE SEQUENCE</scope>
    <source>
        <strain>BALB/cJ</strain>
        <tissue>Lung</tissue>
        <tissue>Skin</tissue>
    </source>
</reference>
<reference key="3">
    <citation type="journal article" date="1994" name="Dev. Dyn.">
        <title>Gene encoding a novel murine tissue inhibitor of metalloproteinases (TIMP), TIMP-3, is expressed in developing mouse epithelia, cartilage, and muscle, and is located on mouse chromosome 10.</title>
        <authorList>
            <person name="Apte S.S."/>
            <person name="Hayashi K."/>
            <person name="Seldin M.F."/>
            <person name="Mattei M.-G."/>
            <person name="Hayashi M."/>
            <person name="Olsen B.R."/>
        </authorList>
    </citation>
    <scope>NUCLEOTIDE SEQUENCE [MRNA]</scope>
    <source>
        <tissue>Lung</tissue>
    </source>
</reference>
<reference key="4">
    <citation type="journal article" date="1995" name="J. Biol. Chem.">
        <title>Molecular cloning of mouse tissue inhibitor of metalloproteinases-3 and its promoter. Specific lack of expression in neoplastic JB6 cells may reflect altered gene methylation.</title>
        <authorList>
            <person name="Sun Y."/>
            <person name="Hegamyer G."/>
            <person name="Kim H."/>
            <person name="Sithanandam K."/>
            <person name="Li H."/>
            <person name="Watts R."/>
            <person name="Colburn N.H."/>
        </authorList>
    </citation>
    <scope>NUCLEOTIDE SEQUENCE [MRNA]</scope>
</reference>
<reference key="5">
    <citation type="journal article" date="1995" name="J. Biol. Chem.">
        <title>The gene structure of tissue inhibitor of metalloproteinases (TIMP)-3 and its inhibitory activities define the distinct TIMP gene family.</title>
        <authorList>
            <person name="Apte S.S."/>
            <person name="Olsen B.R."/>
            <person name="Murphy G."/>
        </authorList>
    </citation>
    <scope>NUCLEOTIDE SEQUENCE [GENOMIC DNA]</scope>
    <source>
        <strain>129/Sv</strain>
    </source>
</reference>
<reference key="6">
    <citation type="journal article" date="2005" name="Science">
        <title>The transcriptional landscape of the mammalian genome.</title>
        <authorList>
            <person name="Carninci P."/>
            <person name="Kasukawa T."/>
            <person name="Katayama S."/>
            <person name="Gough J."/>
            <person name="Frith M.C."/>
            <person name="Maeda N."/>
            <person name="Oyama R."/>
            <person name="Ravasi T."/>
            <person name="Lenhard B."/>
            <person name="Wells C."/>
            <person name="Kodzius R."/>
            <person name="Shimokawa K."/>
            <person name="Bajic V.B."/>
            <person name="Brenner S.E."/>
            <person name="Batalov S."/>
            <person name="Forrest A.R."/>
            <person name="Zavolan M."/>
            <person name="Davis M.J."/>
            <person name="Wilming L.G."/>
            <person name="Aidinis V."/>
            <person name="Allen J.E."/>
            <person name="Ambesi-Impiombato A."/>
            <person name="Apweiler R."/>
            <person name="Aturaliya R.N."/>
            <person name="Bailey T.L."/>
            <person name="Bansal M."/>
            <person name="Baxter L."/>
            <person name="Beisel K.W."/>
            <person name="Bersano T."/>
            <person name="Bono H."/>
            <person name="Chalk A.M."/>
            <person name="Chiu K.P."/>
            <person name="Choudhary V."/>
            <person name="Christoffels A."/>
            <person name="Clutterbuck D.R."/>
            <person name="Crowe M.L."/>
            <person name="Dalla E."/>
            <person name="Dalrymple B.P."/>
            <person name="de Bono B."/>
            <person name="Della Gatta G."/>
            <person name="di Bernardo D."/>
            <person name="Down T."/>
            <person name="Engstrom P."/>
            <person name="Fagiolini M."/>
            <person name="Faulkner G."/>
            <person name="Fletcher C.F."/>
            <person name="Fukushima T."/>
            <person name="Furuno M."/>
            <person name="Futaki S."/>
            <person name="Gariboldi M."/>
            <person name="Georgii-Hemming P."/>
            <person name="Gingeras T.R."/>
            <person name="Gojobori T."/>
            <person name="Green R.E."/>
            <person name="Gustincich S."/>
            <person name="Harbers M."/>
            <person name="Hayashi Y."/>
            <person name="Hensch T.K."/>
            <person name="Hirokawa N."/>
            <person name="Hill D."/>
            <person name="Huminiecki L."/>
            <person name="Iacono M."/>
            <person name="Ikeo K."/>
            <person name="Iwama A."/>
            <person name="Ishikawa T."/>
            <person name="Jakt M."/>
            <person name="Kanapin A."/>
            <person name="Katoh M."/>
            <person name="Kawasawa Y."/>
            <person name="Kelso J."/>
            <person name="Kitamura H."/>
            <person name="Kitano H."/>
            <person name="Kollias G."/>
            <person name="Krishnan S.P."/>
            <person name="Kruger A."/>
            <person name="Kummerfeld S.K."/>
            <person name="Kurochkin I.V."/>
            <person name="Lareau L.F."/>
            <person name="Lazarevic D."/>
            <person name="Lipovich L."/>
            <person name="Liu J."/>
            <person name="Liuni S."/>
            <person name="McWilliam S."/>
            <person name="Madan Babu M."/>
            <person name="Madera M."/>
            <person name="Marchionni L."/>
            <person name="Matsuda H."/>
            <person name="Matsuzawa S."/>
            <person name="Miki H."/>
            <person name="Mignone F."/>
            <person name="Miyake S."/>
            <person name="Morris K."/>
            <person name="Mottagui-Tabar S."/>
            <person name="Mulder N."/>
            <person name="Nakano N."/>
            <person name="Nakauchi H."/>
            <person name="Ng P."/>
            <person name="Nilsson R."/>
            <person name="Nishiguchi S."/>
            <person name="Nishikawa S."/>
            <person name="Nori F."/>
            <person name="Ohara O."/>
            <person name="Okazaki Y."/>
            <person name="Orlando V."/>
            <person name="Pang K.C."/>
            <person name="Pavan W.J."/>
            <person name="Pavesi G."/>
            <person name="Pesole G."/>
            <person name="Petrovsky N."/>
            <person name="Piazza S."/>
            <person name="Reed J."/>
            <person name="Reid J.F."/>
            <person name="Ring B.Z."/>
            <person name="Ringwald M."/>
            <person name="Rost B."/>
            <person name="Ruan Y."/>
            <person name="Salzberg S.L."/>
            <person name="Sandelin A."/>
            <person name="Schneider C."/>
            <person name="Schoenbach C."/>
            <person name="Sekiguchi K."/>
            <person name="Semple C.A."/>
            <person name="Seno S."/>
            <person name="Sessa L."/>
            <person name="Sheng Y."/>
            <person name="Shibata Y."/>
            <person name="Shimada H."/>
            <person name="Shimada K."/>
            <person name="Silva D."/>
            <person name="Sinclair B."/>
            <person name="Sperling S."/>
            <person name="Stupka E."/>
            <person name="Sugiura K."/>
            <person name="Sultana R."/>
            <person name="Takenaka Y."/>
            <person name="Taki K."/>
            <person name="Tammoja K."/>
            <person name="Tan S.L."/>
            <person name="Tang S."/>
            <person name="Taylor M.S."/>
            <person name="Tegner J."/>
            <person name="Teichmann S.A."/>
            <person name="Ueda H.R."/>
            <person name="van Nimwegen E."/>
            <person name="Verardo R."/>
            <person name="Wei C.L."/>
            <person name="Yagi K."/>
            <person name="Yamanishi H."/>
            <person name="Zabarovsky E."/>
            <person name="Zhu S."/>
            <person name="Zimmer A."/>
            <person name="Hide W."/>
            <person name="Bult C."/>
            <person name="Grimmond S.M."/>
            <person name="Teasdale R.D."/>
            <person name="Liu E.T."/>
            <person name="Brusic V."/>
            <person name="Quackenbush J."/>
            <person name="Wahlestedt C."/>
            <person name="Mattick J.S."/>
            <person name="Hume D.A."/>
            <person name="Kai C."/>
            <person name="Sasaki D."/>
            <person name="Tomaru Y."/>
            <person name="Fukuda S."/>
            <person name="Kanamori-Katayama M."/>
            <person name="Suzuki M."/>
            <person name="Aoki J."/>
            <person name="Arakawa T."/>
            <person name="Iida J."/>
            <person name="Imamura K."/>
            <person name="Itoh M."/>
            <person name="Kato T."/>
            <person name="Kawaji H."/>
            <person name="Kawagashira N."/>
            <person name="Kawashima T."/>
            <person name="Kojima M."/>
            <person name="Kondo S."/>
            <person name="Konno H."/>
            <person name="Nakano K."/>
            <person name="Ninomiya N."/>
            <person name="Nishio T."/>
            <person name="Okada M."/>
            <person name="Plessy C."/>
            <person name="Shibata K."/>
            <person name="Shiraki T."/>
            <person name="Suzuki S."/>
            <person name="Tagami M."/>
            <person name="Waki K."/>
            <person name="Watahiki A."/>
            <person name="Okamura-Oho Y."/>
            <person name="Suzuki H."/>
            <person name="Kawai J."/>
            <person name="Hayashizaki Y."/>
        </authorList>
    </citation>
    <scope>NUCLEOTIDE SEQUENCE [LARGE SCALE MRNA]</scope>
    <source>
        <strain>C57BL/6J</strain>
        <tissue>Spinal ganglion</tissue>
    </source>
</reference>
<reference key="7">
    <citation type="journal article" date="2004" name="Genome Res.">
        <title>The status, quality, and expansion of the NIH full-length cDNA project: the Mammalian Gene Collection (MGC).</title>
        <authorList>
            <consortium name="The MGC Project Team"/>
        </authorList>
    </citation>
    <scope>NUCLEOTIDE SEQUENCE [LARGE SCALE MRNA]</scope>
    <source>
        <strain>FVB/N</strain>
        <tissue>Kidney</tissue>
    </source>
</reference>
<reference key="8">
    <citation type="journal article" date="2004" name="Nat. Genet.">
        <title>Abnormal TNF activity in Timp3-/- mice leads to chronic hepatic inflammation and failure of liver regeneration.</title>
        <authorList>
            <person name="Mohammed F.F."/>
            <person name="Smookler D.S."/>
            <person name="Taylor S.E."/>
            <person name="Fingleton B."/>
            <person name="Kassiri Z."/>
            <person name="Sanchez O.H."/>
            <person name="English J.L."/>
            <person name="Matrisian L.M."/>
            <person name="Au B."/>
            <person name="Yeh W.C."/>
            <person name="Khokha R."/>
        </authorList>
    </citation>
    <scope>FUNCTION</scope>
    <scope>DISRUPTION PHENOTYPE</scope>
</reference>
<reference key="9">
    <citation type="journal article" date="2010" name="Cell">
        <title>A tissue-specific atlas of mouse protein phosphorylation and expression.</title>
        <authorList>
            <person name="Huttlin E.L."/>
            <person name="Jedrychowski M.P."/>
            <person name="Elias J.E."/>
            <person name="Goswami T."/>
            <person name="Rad R."/>
            <person name="Beausoleil S.A."/>
            <person name="Villen J."/>
            <person name="Haas W."/>
            <person name="Sowa M.E."/>
            <person name="Gygi S.P."/>
        </authorList>
    </citation>
    <scope>IDENTIFICATION BY MASS SPECTROMETRY [LARGE SCALE ANALYSIS]</scope>
    <source>
        <tissue>Lung</tissue>
    </source>
</reference>
<reference key="10">
    <citation type="journal article" date="2011" name="Invest. Ophthalmol. Vis. Sci.">
        <title>Increased neovascularization in mice lacking tissue inhibitor of metalloproteinases-3.</title>
        <authorList>
            <person name="Ebrahem Q."/>
            <person name="Qi J.H."/>
            <person name="Sugimoto M."/>
            <person name="Ali M."/>
            <person name="Sears J.E."/>
            <person name="Cutler A."/>
            <person name="Khokha R."/>
            <person name="Vasanji A."/>
            <person name="Anand-Apte B."/>
        </authorList>
    </citation>
    <scope>FUNCTION</scope>
    <scope>DISRUPTION PHENOTYPE</scope>
</reference>
<keyword id="KW-1015">Disulfide bond</keyword>
<keyword id="KW-0272">Extracellular matrix</keyword>
<keyword id="KW-0479">Metal-binding</keyword>
<keyword id="KW-0481">Metalloenzyme inhibitor</keyword>
<keyword id="KW-0483">Metalloprotease inhibitor</keyword>
<keyword id="KW-0646">Protease inhibitor</keyword>
<keyword id="KW-1185">Reference proteome</keyword>
<keyword id="KW-0964">Secreted</keyword>
<keyword id="KW-0732">Signal</keyword>
<keyword id="KW-0862">Zinc</keyword>
<proteinExistence type="evidence at protein level"/>
<gene>
    <name type="primary">Timp3</name>
    <name type="synonym">Sun</name>
    <name type="synonym">Timp-3</name>
</gene>
<evidence type="ECO:0000250" key="1"/>
<evidence type="ECO:0000250" key="2">
    <source>
        <dbReference type="UniProtKB" id="P16035"/>
    </source>
</evidence>
<evidence type="ECO:0000250" key="3">
    <source>
        <dbReference type="UniProtKB" id="P35625"/>
    </source>
</evidence>
<evidence type="ECO:0000255" key="4"/>
<evidence type="ECO:0000255" key="5">
    <source>
        <dbReference type="PROSITE-ProRule" id="PRU00295"/>
    </source>
</evidence>
<evidence type="ECO:0000269" key="6">
    <source>
    </source>
</evidence>
<evidence type="ECO:0000269" key="7">
    <source>
    </source>
</evidence>
<evidence type="ECO:0000305" key="8"/>
<name>TIMP3_MOUSE</name>
<dbReference type="EMBL" id="L27424">
    <property type="protein sequence ID" value="AAA40447.1"/>
    <property type="molecule type" value="mRNA"/>
</dbReference>
<dbReference type="EMBL" id="Z30970">
    <property type="protein sequence ID" value="CAA83218.1"/>
    <property type="molecule type" value="mRNA"/>
</dbReference>
<dbReference type="EMBL" id="L19622">
    <property type="protein sequence ID" value="AAC37669.1"/>
    <property type="molecule type" value="mRNA"/>
</dbReference>
<dbReference type="EMBL" id="U26437">
    <property type="protein sequence ID" value="AAA85860.1"/>
    <property type="molecule type" value="Genomic_DNA"/>
</dbReference>
<dbReference type="EMBL" id="U26433">
    <property type="protein sequence ID" value="AAA85860.1"/>
    <property type="status" value="JOINED"/>
    <property type="molecule type" value="Genomic_DNA"/>
</dbReference>
<dbReference type="EMBL" id="U26434">
    <property type="protein sequence ID" value="AAA85860.1"/>
    <property type="status" value="JOINED"/>
    <property type="molecule type" value="Genomic_DNA"/>
</dbReference>
<dbReference type="EMBL" id="U26435">
    <property type="protein sequence ID" value="AAA85860.1"/>
    <property type="status" value="JOINED"/>
    <property type="molecule type" value="Genomic_DNA"/>
</dbReference>
<dbReference type="EMBL" id="U26436">
    <property type="protein sequence ID" value="AAA85860.1"/>
    <property type="status" value="JOINED"/>
    <property type="molecule type" value="Genomic_DNA"/>
</dbReference>
<dbReference type="EMBL" id="AK083905">
    <property type="protein sequence ID" value="BAC39055.1"/>
    <property type="molecule type" value="mRNA"/>
</dbReference>
<dbReference type="EMBL" id="BC014713">
    <property type="protein sequence ID" value="AAH14713.1"/>
    <property type="molecule type" value="mRNA"/>
</dbReference>
<dbReference type="CCDS" id="CCDS24097.1"/>
<dbReference type="PIR" id="A53532">
    <property type="entry name" value="A53532"/>
</dbReference>
<dbReference type="RefSeq" id="NP_035725.1">
    <property type="nucleotide sequence ID" value="NM_011595.2"/>
</dbReference>
<dbReference type="SMR" id="P39876"/>
<dbReference type="BioGRID" id="204204">
    <property type="interactions" value="1"/>
</dbReference>
<dbReference type="FunCoup" id="P39876">
    <property type="interactions" value="220"/>
</dbReference>
<dbReference type="STRING" id="10090.ENSMUSP00000020234"/>
<dbReference type="MEROPS" id="I35.003"/>
<dbReference type="PhosphoSitePlus" id="P39876"/>
<dbReference type="jPOST" id="P39876"/>
<dbReference type="PaxDb" id="10090-ENSMUSP00000020234"/>
<dbReference type="PeptideAtlas" id="P39876"/>
<dbReference type="ProteomicsDB" id="258886"/>
<dbReference type="Pumba" id="P39876"/>
<dbReference type="Antibodypedia" id="11314">
    <property type="antibodies" value="758 antibodies from 42 providers"/>
</dbReference>
<dbReference type="DNASU" id="21859"/>
<dbReference type="Ensembl" id="ENSMUST00000020234.14">
    <property type="protein sequence ID" value="ENSMUSP00000020234.8"/>
    <property type="gene ID" value="ENSMUSG00000020044.14"/>
</dbReference>
<dbReference type="GeneID" id="21859"/>
<dbReference type="KEGG" id="mmu:21859"/>
<dbReference type="UCSC" id="uc007gnr.1">
    <property type="organism name" value="mouse"/>
</dbReference>
<dbReference type="AGR" id="MGI:98754"/>
<dbReference type="CTD" id="7078"/>
<dbReference type="MGI" id="MGI:98754">
    <property type="gene designation" value="Timp3"/>
</dbReference>
<dbReference type="VEuPathDB" id="HostDB:ENSMUSG00000020044"/>
<dbReference type="eggNOG" id="KOG4745">
    <property type="taxonomic scope" value="Eukaryota"/>
</dbReference>
<dbReference type="GeneTree" id="ENSGT00940000159601"/>
<dbReference type="HOGENOM" id="CLU_084029_0_0_1"/>
<dbReference type="InParanoid" id="P39876"/>
<dbReference type="OMA" id="PFGKCET"/>
<dbReference type="OrthoDB" id="6041373at2759"/>
<dbReference type="PhylomeDB" id="P39876"/>
<dbReference type="TreeFam" id="TF317409"/>
<dbReference type="Reactome" id="R-MMU-114608">
    <property type="pathway name" value="Platelet degranulation"/>
</dbReference>
<dbReference type="BioGRID-ORCS" id="21859">
    <property type="hits" value="3 hits in 75 CRISPR screens"/>
</dbReference>
<dbReference type="ChiTaRS" id="Timp3">
    <property type="organism name" value="mouse"/>
</dbReference>
<dbReference type="PRO" id="PR:P39876"/>
<dbReference type="Proteomes" id="UP000000589">
    <property type="component" value="Chromosome 10"/>
</dbReference>
<dbReference type="RNAct" id="P39876">
    <property type="molecule type" value="protein"/>
</dbReference>
<dbReference type="Bgee" id="ENSMUSG00000020044">
    <property type="expression patterns" value="Expressed in pigmented layer of retina and 263 other cell types or tissues"/>
</dbReference>
<dbReference type="ExpressionAtlas" id="P39876">
    <property type="expression patterns" value="baseline and differential"/>
</dbReference>
<dbReference type="GO" id="GO:0005604">
    <property type="term" value="C:basement membrane"/>
    <property type="evidence" value="ECO:0000314"/>
    <property type="project" value="MGI"/>
</dbReference>
<dbReference type="GO" id="GO:0005615">
    <property type="term" value="C:extracellular space"/>
    <property type="evidence" value="ECO:0007005"/>
    <property type="project" value="BHF-UCL"/>
</dbReference>
<dbReference type="GO" id="GO:0008191">
    <property type="term" value="F:metalloendopeptidase inhibitor activity"/>
    <property type="evidence" value="ECO:0007669"/>
    <property type="project" value="InterPro"/>
</dbReference>
<dbReference type="GO" id="GO:0008270">
    <property type="term" value="F:zinc ion binding"/>
    <property type="evidence" value="ECO:0000250"/>
    <property type="project" value="UniProtKB"/>
</dbReference>
<dbReference type="GO" id="GO:0010716">
    <property type="term" value="P:negative regulation of extracellular matrix disassembly"/>
    <property type="evidence" value="ECO:0000315"/>
    <property type="project" value="BHF-UCL"/>
</dbReference>
<dbReference type="GO" id="GO:0051045">
    <property type="term" value="P:negative regulation of membrane protein ectodomain proteolysis"/>
    <property type="evidence" value="ECO:0007669"/>
    <property type="project" value="Ensembl"/>
</dbReference>
<dbReference type="CDD" id="cd03585">
    <property type="entry name" value="NTR_TIMP"/>
    <property type="match status" value="1"/>
</dbReference>
<dbReference type="FunFam" id="3.90.370.10:FF:000001">
    <property type="entry name" value="Metalloproteinase inhibitor 3"/>
    <property type="match status" value="1"/>
</dbReference>
<dbReference type="FunFam" id="2.40.50.120:FF:000005">
    <property type="entry name" value="Metalloproteinase inhibitor 3 precursor"/>
    <property type="match status" value="1"/>
</dbReference>
<dbReference type="Gene3D" id="2.40.50.120">
    <property type="match status" value="1"/>
</dbReference>
<dbReference type="Gene3D" id="3.90.370.10">
    <property type="entry name" value="Tissue inhibitor of metalloproteinase-1. Chain B, domain 1"/>
    <property type="match status" value="1"/>
</dbReference>
<dbReference type="InterPro" id="IPR001134">
    <property type="entry name" value="Netrin_domain"/>
</dbReference>
<dbReference type="InterPro" id="IPR001820">
    <property type="entry name" value="TIMP"/>
</dbReference>
<dbReference type="InterPro" id="IPR008993">
    <property type="entry name" value="TIMP-like_OB-fold"/>
</dbReference>
<dbReference type="InterPro" id="IPR027465">
    <property type="entry name" value="TIMP_C"/>
</dbReference>
<dbReference type="InterPro" id="IPR030490">
    <property type="entry name" value="TIMP_CS"/>
</dbReference>
<dbReference type="PANTHER" id="PTHR11844">
    <property type="entry name" value="METALLOPROTEASE INHIBITOR"/>
    <property type="match status" value="1"/>
</dbReference>
<dbReference type="PANTHER" id="PTHR11844:SF22">
    <property type="entry name" value="METALLOPROTEINASE INHIBITOR 3"/>
    <property type="match status" value="1"/>
</dbReference>
<dbReference type="Pfam" id="PF00965">
    <property type="entry name" value="TIMP"/>
    <property type="match status" value="1"/>
</dbReference>
<dbReference type="SMART" id="SM00206">
    <property type="entry name" value="NTR"/>
    <property type="match status" value="1"/>
</dbReference>
<dbReference type="SUPFAM" id="SSF50242">
    <property type="entry name" value="TIMP-like"/>
    <property type="match status" value="1"/>
</dbReference>
<dbReference type="PROSITE" id="PS50189">
    <property type="entry name" value="NTR"/>
    <property type="match status" value="1"/>
</dbReference>
<dbReference type="PROSITE" id="PS00288">
    <property type="entry name" value="TIMP"/>
    <property type="match status" value="1"/>
</dbReference>
<accession>P39876</accession>
<accession>Q91WL9</accession>